<dbReference type="EMBL" id="CP001365">
    <property type="protein sequence ID" value="ACM58014.1"/>
    <property type="molecule type" value="Genomic_DNA"/>
</dbReference>
<dbReference type="RefSeq" id="WP_008007894.1">
    <property type="nucleotide sequence ID" value="NC_012029.1"/>
</dbReference>
<dbReference type="SMR" id="B9LSR7"/>
<dbReference type="GeneID" id="7400557"/>
<dbReference type="KEGG" id="hla:Hlac_2439"/>
<dbReference type="eggNOG" id="arCOG04095">
    <property type="taxonomic scope" value="Archaea"/>
</dbReference>
<dbReference type="HOGENOM" id="CLU_095071_3_0_2"/>
<dbReference type="Proteomes" id="UP000000740">
    <property type="component" value="Chromosome 1"/>
</dbReference>
<dbReference type="GO" id="GO:0022625">
    <property type="term" value="C:cytosolic large ribosomal subunit"/>
    <property type="evidence" value="ECO:0007669"/>
    <property type="project" value="TreeGrafter"/>
</dbReference>
<dbReference type="GO" id="GO:0070180">
    <property type="term" value="F:large ribosomal subunit rRNA binding"/>
    <property type="evidence" value="ECO:0007669"/>
    <property type="project" value="TreeGrafter"/>
</dbReference>
<dbReference type="GO" id="GO:0003735">
    <property type="term" value="F:structural constituent of ribosome"/>
    <property type="evidence" value="ECO:0007669"/>
    <property type="project" value="InterPro"/>
</dbReference>
<dbReference type="GO" id="GO:0006412">
    <property type="term" value="P:translation"/>
    <property type="evidence" value="ECO:0007669"/>
    <property type="project" value="UniProtKB-UniRule"/>
</dbReference>
<dbReference type="CDD" id="cd00337">
    <property type="entry name" value="Ribosomal_uL14"/>
    <property type="match status" value="1"/>
</dbReference>
<dbReference type="FunFam" id="2.40.150.20:FF:000007">
    <property type="entry name" value="50S ribosomal protein L14"/>
    <property type="match status" value="1"/>
</dbReference>
<dbReference type="Gene3D" id="2.40.150.20">
    <property type="entry name" value="Ribosomal protein L14"/>
    <property type="match status" value="1"/>
</dbReference>
<dbReference type="HAMAP" id="MF_01367">
    <property type="entry name" value="Ribosomal_uL14"/>
    <property type="match status" value="1"/>
</dbReference>
<dbReference type="InterPro" id="IPR000218">
    <property type="entry name" value="Ribosomal_uL14"/>
</dbReference>
<dbReference type="InterPro" id="IPR019971">
    <property type="entry name" value="Ribosomal_uL14_arc"/>
</dbReference>
<dbReference type="InterPro" id="IPR019972">
    <property type="entry name" value="Ribosomal_uL14_CS"/>
</dbReference>
<dbReference type="InterPro" id="IPR036853">
    <property type="entry name" value="Ribosomal_uL14_sf"/>
</dbReference>
<dbReference type="NCBIfam" id="NF006344">
    <property type="entry name" value="PRK08571.1"/>
    <property type="match status" value="1"/>
</dbReference>
<dbReference type="NCBIfam" id="TIGR03673">
    <property type="entry name" value="uL14_arch"/>
    <property type="match status" value="1"/>
</dbReference>
<dbReference type="PANTHER" id="PTHR11761">
    <property type="entry name" value="50S/60S RIBOSOMAL PROTEIN L14/L23"/>
    <property type="match status" value="1"/>
</dbReference>
<dbReference type="PANTHER" id="PTHR11761:SF8">
    <property type="entry name" value="LARGE RIBOSOMAL SUBUNIT PROTEIN UL14"/>
    <property type="match status" value="1"/>
</dbReference>
<dbReference type="Pfam" id="PF00238">
    <property type="entry name" value="Ribosomal_L14"/>
    <property type="match status" value="1"/>
</dbReference>
<dbReference type="SMART" id="SM01374">
    <property type="entry name" value="Ribosomal_L14"/>
    <property type="match status" value="1"/>
</dbReference>
<dbReference type="SUPFAM" id="SSF50193">
    <property type="entry name" value="Ribosomal protein L14"/>
    <property type="match status" value="1"/>
</dbReference>
<dbReference type="PROSITE" id="PS00049">
    <property type="entry name" value="RIBOSOMAL_L14"/>
    <property type="match status" value="1"/>
</dbReference>
<comment type="function">
    <text evidence="1">Binds to 23S rRNA. Forms part of two intersubunit bridges in the 70S ribosome.</text>
</comment>
<comment type="subunit">
    <text evidence="1">Part of the 50S ribosomal subunit. Forms a cluster with proteins L3 and L24e, part of which may contact the 16S rRNA in 2 intersubunit bridges.</text>
</comment>
<comment type="similarity">
    <text evidence="1">Belongs to the universal ribosomal protein uL14 family.</text>
</comment>
<gene>
    <name evidence="1" type="primary">rpl14</name>
    <name type="ordered locus">Hlac_2439</name>
</gene>
<keyword id="KW-1185">Reference proteome</keyword>
<keyword id="KW-0687">Ribonucleoprotein</keyword>
<keyword id="KW-0689">Ribosomal protein</keyword>
<keyword id="KW-0694">RNA-binding</keyword>
<keyword id="KW-0699">rRNA-binding</keyword>
<reference key="1">
    <citation type="journal article" date="2016" name="Stand. Genomic Sci.">
        <title>Complete genome sequence of the Antarctic Halorubrum lacusprofundi type strain ACAM 34.</title>
        <authorList>
            <person name="Anderson I.J."/>
            <person name="DasSarma P."/>
            <person name="Lucas S."/>
            <person name="Copeland A."/>
            <person name="Lapidus A."/>
            <person name="Del Rio T.G."/>
            <person name="Tice H."/>
            <person name="Dalin E."/>
            <person name="Bruce D.C."/>
            <person name="Goodwin L."/>
            <person name="Pitluck S."/>
            <person name="Sims D."/>
            <person name="Brettin T.S."/>
            <person name="Detter J.C."/>
            <person name="Han C.S."/>
            <person name="Larimer F."/>
            <person name="Hauser L."/>
            <person name="Land M."/>
            <person name="Ivanova N."/>
            <person name="Richardson P."/>
            <person name="Cavicchioli R."/>
            <person name="DasSarma S."/>
            <person name="Woese C.R."/>
            <person name="Kyrpides N.C."/>
        </authorList>
    </citation>
    <scope>NUCLEOTIDE SEQUENCE [LARGE SCALE GENOMIC DNA]</scope>
    <source>
        <strain>ATCC 49239 / DSM 5036 / JCM 8891 / ACAM 34</strain>
    </source>
</reference>
<accession>B9LSR7</accession>
<protein>
    <recommendedName>
        <fullName evidence="1">Large ribosomal subunit protein uL14</fullName>
    </recommendedName>
    <alternativeName>
        <fullName evidence="2">50S ribosomal protein L14</fullName>
    </alternativeName>
</protein>
<name>RL14_HALLT</name>
<sequence>MEALKADVTQGLSKGSLITCADNTGARELKVISVAGYSGTKNRHPKAGIGDKVTVSVTKGTPEMRRQVLEAVVVRQRKPIRRPNGTRVKFEDNAAVIIDDLDEPRGTEIKGPVAREVAERFGSIASTATMIV</sequence>
<feature type="chain" id="PRO_1000166923" description="Large ribosomal subunit protein uL14">
    <location>
        <begin position="1"/>
        <end position="132"/>
    </location>
</feature>
<organism>
    <name type="scientific">Halorubrum lacusprofundi (strain ATCC 49239 / DSM 5036 / JCM 8891 / ACAM 34)</name>
    <dbReference type="NCBI Taxonomy" id="416348"/>
    <lineage>
        <taxon>Archaea</taxon>
        <taxon>Methanobacteriati</taxon>
        <taxon>Methanobacteriota</taxon>
        <taxon>Stenosarchaea group</taxon>
        <taxon>Halobacteria</taxon>
        <taxon>Halobacteriales</taxon>
        <taxon>Haloferacaceae</taxon>
        <taxon>Halorubrum</taxon>
    </lineage>
</organism>
<evidence type="ECO:0000255" key="1">
    <source>
        <dbReference type="HAMAP-Rule" id="MF_01367"/>
    </source>
</evidence>
<evidence type="ECO:0000305" key="2"/>
<proteinExistence type="inferred from homology"/>